<keyword id="KW-0027">Amidation</keyword>
<keyword id="KW-0903">Direct protein sequencing</keyword>
<keyword id="KW-1015">Disulfide bond</keyword>
<keyword id="KW-0873">Pyrrolidone carboxylic acid</keyword>
<keyword id="KW-0964">Secreted</keyword>
<keyword id="KW-0732">Signal</keyword>
<keyword id="KW-0800">Toxin</keyword>
<protein>
    <recommendedName>
        <fullName evidence="4">Conotoxin ViVA</fullName>
    </recommendedName>
    <alternativeName>
        <fullName evidence="5">Vi1359</fullName>
    </alternativeName>
    <alternativeName>
        <fullName evidence="6">Vi5.3</fullName>
    </alternativeName>
</protein>
<evidence type="ECO:0000255" key="1"/>
<evidence type="ECO:0000269" key="2">
    <source>
    </source>
</evidence>
<evidence type="ECO:0000269" key="3">
    <source>
    </source>
</evidence>
<evidence type="ECO:0000303" key="4">
    <source>
    </source>
</evidence>
<evidence type="ECO:0000303" key="5">
    <source>
    </source>
</evidence>
<evidence type="ECO:0000303" key="6">
    <source>
    </source>
</evidence>
<evidence type="ECO:0000305" key="7"/>
<evidence type="ECO:0000305" key="8">
    <source>
    </source>
</evidence>
<evidence type="ECO:0000305" key="9">
    <source>
    </source>
</evidence>
<reference key="1">
    <citation type="journal article" date="2007" name="Peptides">
        <title>Identification of six novel T-1 conotoxins from Conus pulicarius by molecular cloning.</title>
        <authorList>
            <person name="Peng C."/>
            <person name="Wu X."/>
            <person name="Han Y."/>
            <person name="Yuan D."/>
            <person name="Chi C."/>
            <person name="Wang C."/>
        </authorList>
    </citation>
    <scope>NUCLEOTIDE SEQUENCE [MRNA]</scope>
    <source>
        <tissue>Venom duct</tissue>
    </source>
</reference>
<reference key="2">
    <citation type="journal article" date="2013" name="Biochem. Pharmacol.">
        <title>Identification, structural and pharmacological characterization of tau-CnVA, a conopeptide that selectively interacts with somatostatin sst receptor.</title>
        <authorList>
            <person name="Petrel C."/>
            <person name="Hocking H.G."/>
            <person name="Reynaud M."/>
            <person name="Upert G."/>
            <person name="Favreau P."/>
            <person name="Biass D."/>
            <person name="Paolini-Bertrand M."/>
            <person name="Peigneur S."/>
            <person name="Tytgat J."/>
            <person name="Gilles N."/>
            <person name="Hartley O."/>
            <person name="Boelens R."/>
            <person name="Stocklin R."/>
            <person name="Servent D."/>
        </authorList>
    </citation>
    <scope>SYNTHESIS OF 47-58</scope>
</reference>
<reference key="3">
    <citation type="journal article" date="2006" name="Toxicon">
        <title>Fourier transform mass spectrometry: a powerful tool for toxin analysis.</title>
        <authorList>
            <person name="Quinton L."/>
            <person name="Le Caer J.-P."/>
            <person name="Vinh J."/>
            <person name="Gilles N."/>
            <person name="Chamot-Rooke J."/>
        </authorList>
    </citation>
    <scope>PROTEIN SEQUENCE OF 47-58</scope>
    <scope>PYROGLUTAMATE FORMATION AT GLN-47</scope>
    <scope>AMIDATION AT ILE-58</scope>
    <scope>MASS SPECTROMETRY</scope>
    <scope>SUBCELLULAR LOCATION</scope>
    <source>
        <tissue>Venom</tissue>
    </source>
</reference>
<reference key="4">
    <citation type="journal article" date="2007" name="J. Am. Soc. Mass Spectrom.">
        <title>Sequencing of T-superfamily conotoxins from Conus virgo: pyroglutamic acid identification and disulfide arrangement by MALDI mass spectrometry.</title>
        <authorList>
            <person name="Mandal A.K."/>
            <person name="Ramasamy M.R.S."/>
            <person name="Sabareesh V."/>
            <person name="Openshaw M.E."/>
            <person name="Krishnan K.S."/>
            <person name="Balaram P."/>
        </authorList>
    </citation>
    <scope>PROTEIN SEQUENCE OF 47-58</scope>
    <scope>PYROGLUTAMATE FORMATION AT GLN-47</scope>
    <scope>AMIDATION AT ILE-58</scope>
    <scope>DISULFIDE BONDS</scope>
    <scope>MASS SPECTROMETRY</scope>
</reference>
<proteinExistence type="evidence at protein level"/>
<name>CT5A_CONVR</name>
<accession>P0C2B0</accession>
<accession>B4XT50</accession>
<sequence>MRCVPVFIILLLLIPSASSAAVQPKTEKDDVPLASVHDSALRILSRQCCITIPECCRIG</sequence>
<dbReference type="EMBL" id="EU090178">
    <property type="protein sequence ID" value="ABW77586.1"/>
    <property type="molecule type" value="mRNA"/>
</dbReference>
<dbReference type="ConoServer" id="2833">
    <property type="toxin name" value="ViVA precursor"/>
</dbReference>
<dbReference type="GO" id="GO:0005576">
    <property type="term" value="C:extracellular region"/>
    <property type="evidence" value="ECO:0007669"/>
    <property type="project" value="UniProtKB-SubCell"/>
</dbReference>
<dbReference type="GO" id="GO:0090729">
    <property type="term" value="F:toxin activity"/>
    <property type="evidence" value="ECO:0007669"/>
    <property type="project" value="UniProtKB-KW"/>
</dbReference>
<dbReference type="InterPro" id="IPR031565">
    <property type="entry name" value="T-conotoxin"/>
</dbReference>
<dbReference type="Pfam" id="PF16981">
    <property type="entry name" value="Chi-conotoxin"/>
    <property type="match status" value="1"/>
</dbReference>
<comment type="subcellular location">
    <subcellularLocation>
        <location evidence="2">Secreted</location>
    </subcellularLocation>
</comment>
<comment type="tissue specificity">
    <text evidence="8">Expressed by the venom duct.</text>
</comment>
<comment type="domain">
    <text evidence="7">The cysteine framework is V (CC-CC).</text>
</comment>
<comment type="mass spectrometry"/>
<comment type="mass spectrometry"/>
<comment type="miscellaneous">
    <text evidence="9">Negative results: does not have the ability to interact with the G-protein coupled somatostatin type 3 receptor (SSTR3).</text>
</comment>
<comment type="similarity">
    <text evidence="7">Belongs to the conotoxin T superfamily.</text>
</comment>
<organism>
    <name type="scientific">Conus virgo</name>
    <name type="common">Virgin cone</name>
    <dbReference type="NCBI Taxonomy" id="89427"/>
    <lineage>
        <taxon>Eukaryota</taxon>
        <taxon>Metazoa</taxon>
        <taxon>Spiralia</taxon>
        <taxon>Lophotrochozoa</taxon>
        <taxon>Mollusca</taxon>
        <taxon>Gastropoda</taxon>
        <taxon>Caenogastropoda</taxon>
        <taxon>Neogastropoda</taxon>
        <taxon>Conoidea</taxon>
        <taxon>Conidae</taxon>
        <taxon>Conus</taxon>
        <taxon>Virgiconus</taxon>
    </lineage>
</organism>
<feature type="signal peptide" evidence="1">
    <location>
        <begin position="1"/>
        <end position="19"/>
    </location>
</feature>
<feature type="propeptide" id="PRO_0000316911" evidence="2 3">
    <location>
        <begin position="20"/>
        <end position="46"/>
    </location>
</feature>
<feature type="peptide" id="PRO_0000271475" description="Conotoxin ViVA">
    <location>
        <begin position="47"/>
        <end position="58"/>
    </location>
</feature>
<feature type="modified residue" description="Pyrrolidone carboxylic acid" evidence="2 3">
    <location>
        <position position="47"/>
    </location>
</feature>
<feature type="modified residue" description="Isoleucine amide" evidence="2 3">
    <location>
        <position position="58"/>
    </location>
</feature>
<feature type="disulfide bond" evidence="3">
    <location>
        <begin position="48"/>
        <end position="55"/>
    </location>
</feature>
<feature type="disulfide bond" evidence="3">
    <location>
        <begin position="49"/>
        <end position="56"/>
    </location>
</feature>